<proteinExistence type="inferred from homology"/>
<gene>
    <name evidence="1" type="primary">rpmD</name>
    <name type="ordered locus">mma_3393</name>
</gene>
<organism>
    <name type="scientific">Janthinobacterium sp. (strain Marseille)</name>
    <name type="common">Minibacterium massiliensis</name>
    <dbReference type="NCBI Taxonomy" id="375286"/>
    <lineage>
        <taxon>Bacteria</taxon>
        <taxon>Pseudomonadati</taxon>
        <taxon>Pseudomonadota</taxon>
        <taxon>Betaproteobacteria</taxon>
        <taxon>Burkholderiales</taxon>
        <taxon>Oxalobacteraceae</taxon>
        <taxon>Janthinobacterium</taxon>
    </lineage>
</organism>
<sequence length="59" mass="6364">MANTVKVKLVKGLIGTRETHRATVRGLGLRGINSVSELEDTPAVRGMINKVSYLVKVVS</sequence>
<name>RL30_JANMA</name>
<protein>
    <recommendedName>
        <fullName evidence="1">Large ribosomal subunit protein uL30</fullName>
    </recommendedName>
    <alternativeName>
        <fullName evidence="2">50S ribosomal protein L30</fullName>
    </alternativeName>
</protein>
<reference key="1">
    <citation type="journal article" date="2007" name="PLoS Genet.">
        <title>Genome analysis of Minibacterium massiliensis highlights the convergent evolution of water-living bacteria.</title>
        <authorList>
            <person name="Audic S."/>
            <person name="Robert C."/>
            <person name="Campagna B."/>
            <person name="Parinello H."/>
            <person name="Claverie J.-M."/>
            <person name="Raoult D."/>
            <person name="Drancourt M."/>
        </authorList>
    </citation>
    <scope>NUCLEOTIDE SEQUENCE [LARGE SCALE GENOMIC DNA]</scope>
    <source>
        <strain>Marseille</strain>
    </source>
</reference>
<feature type="chain" id="PRO_0000347106" description="Large ribosomal subunit protein uL30">
    <location>
        <begin position="1"/>
        <end position="59"/>
    </location>
</feature>
<keyword id="KW-0687">Ribonucleoprotein</keyword>
<keyword id="KW-0689">Ribosomal protein</keyword>
<dbReference type="EMBL" id="CP000269">
    <property type="protein sequence ID" value="ABR91655.1"/>
    <property type="molecule type" value="Genomic_DNA"/>
</dbReference>
<dbReference type="RefSeq" id="WP_011872511.1">
    <property type="nucleotide sequence ID" value="NC_009659.1"/>
</dbReference>
<dbReference type="SMR" id="A6T3I6"/>
<dbReference type="STRING" id="375286.mma_3393"/>
<dbReference type="KEGG" id="mms:mma_3393"/>
<dbReference type="eggNOG" id="COG1841">
    <property type="taxonomic scope" value="Bacteria"/>
</dbReference>
<dbReference type="HOGENOM" id="CLU_131047_1_4_4"/>
<dbReference type="Proteomes" id="UP000006388">
    <property type="component" value="Chromosome"/>
</dbReference>
<dbReference type="GO" id="GO:0022625">
    <property type="term" value="C:cytosolic large ribosomal subunit"/>
    <property type="evidence" value="ECO:0007669"/>
    <property type="project" value="TreeGrafter"/>
</dbReference>
<dbReference type="GO" id="GO:0003735">
    <property type="term" value="F:structural constituent of ribosome"/>
    <property type="evidence" value="ECO:0007669"/>
    <property type="project" value="InterPro"/>
</dbReference>
<dbReference type="GO" id="GO:0006412">
    <property type="term" value="P:translation"/>
    <property type="evidence" value="ECO:0007669"/>
    <property type="project" value="UniProtKB-UniRule"/>
</dbReference>
<dbReference type="CDD" id="cd01658">
    <property type="entry name" value="Ribosomal_L30"/>
    <property type="match status" value="1"/>
</dbReference>
<dbReference type="FunFam" id="3.30.1390.20:FF:000001">
    <property type="entry name" value="50S ribosomal protein L30"/>
    <property type="match status" value="1"/>
</dbReference>
<dbReference type="Gene3D" id="3.30.1390.20">
    <property type="entry name" value="Ribosomal protein L30, ferredoxin-like fold domain"/>
    <property type="match status" value="1"/>
</dbReference>
<dbReference type="HAMAP" id="MF_01371_B">
    <property type="entry name" value="Ribosomal_uL30_B"/>
    <property type="match status" value="1"/>
</dbReference>
<dbReference type="InterPro" id="IPR036919">
    <property type="entry name" value="Ribo_uL30_ferredoxin-like_sf"/>
</dbReference>
<dbReference type="InterPro" id="IPR005996">
    <property type="entry name" value="Ribosomal_uL30_bac-type"/>
</dbReference>
<dbReference type="InterPro" id="IPR016082">
    <property type="entry name" value="Ribosomal_uL30_ferredoxin-like"/>
</dbReference>
<dbReference type="NCBIfam" id="TIGR01308">
    <property type="entry name" value="rpmD_bact"/>
    <property type="match status" value="1"/>
</dbReference>
<dbReference type="PANTHER" id="PTHR15892:SF2">
    <property type="entry name" value="LARGE RIBOSOMAL SUBUNIT PROTEIN UL30M"/>
    <property type="match status" value="1"/>
</dbReference>
<dbReference type="PANTHER" id="PTHR15892">
    <property type="entry name" value="MITOCHONDRIAL RIBOSOMAL PROTEIN L30"/>
    <property type="match status" value="1"/>
</dbReference>
<dbReference type="Pfam" id="PF00327">
    <property type="entry name" value="Ribosomal_L30"/>
    <property type="match status" value="1"/>
</dbReference>
<dbReference type="PIRSF" id="PIRSF002211">
    <property type="entry name" value="Ribosomal_L30_bac-type"/>
    <property type="match status" value="1"/>
</dbReference>
<dbReference type="SUPFAM" id="SSF55129">
    <property type="entry name" value="Ribosomal protein L30p/L7e"/>
    <property type="match status" value="1"/>
</dbReference>
<accession>A6T3I6</accession>
<comment type="subunit">
    <text evidence="1">Part of the 50S ribosomal subunit.</text>
</comment>
<comment type="similarity">
    <text evidence="1">Belongs to the universal ribosomal protein uL30 family.</text>
</comment>
<evidence type="ECO:0000255" key="1">
    <source>
        <dbReference type="HAMAP-Rule" id="MF_01371"/>
    </source>
</evidence>
<evidence type="ECO:0000305" key="2"/>